<accession>Q9FHD3</accession>
<reference key="1">
    <citation type="journal article" date="2000" name="DNA Res.">
        <title>Structural analysis of Arabidopsis thaliana chromosome 5. X. Sequence features of the regions of 3,076,755 bp covered by sixty P1 and TAC clones.</title>
        <authorList>
            <person name="Sato S."/>
            <person name="Nakamura Y."/>
            <person name="Kaneko T."/>
            <person name="Katoh T."/>
            <person name="Asamizu E."/>
            <person name="Kotani H."/>
            <person name="Tabata S."/>
        </authorList>
    </citation>
    <scope>NUCLEOTIDE SEQUENCE [LARGE SCALE GENOMIC DNA]</scope>
    <source>
        <strain>cv. Columbia</strain>
    </source>
</reference>
<reference key="2">
    <citation type="journal article" date="2017" name="Plant J.">
        <title>Araport11: a complete reannotation of the Arabidopsis thaliana reference genome.</title>
        <authorList>
            <person name="Cheng C.Y."/>
            <person name="Krishnakumar V."/>
            <person name="Chan A.P."/>
            <person name="Thibaud-Nissen F."/>
            <person name="Schobel S."/>
            <person name="Town C.D."/>
        </authorList>
    </citation>
    <scope>GENOME REANNOTATION</scope>
    <source>
        <strain>cv. Columbia</strain>
    </source>
</reference>
<reference key="3">
    <citation type="journal article" date="2001" name="Plant Physiol.">
        <title>A superfamily of proteins with novel cysteine-rich repeats.</title>
        <authorList>
            <person name="Chen Z."/>
        </authorList>
    </citation>
    <scope>GENE FAMILY ORGANIZATION</scope>
    <scope>NOMENCLATURE</scope>
</reference>
<evidence type="ECO:0000255" key="1"/>
<evidence type="ECO:0000255" key="2">
    <source>
        <dbReference type="PROSITE-ProRule" id="PRU00806"/>
    </source>
</evidence>
<evidence type="ECO:0000305" key="3"/>
<keyword id="KW-0325">Glycoprotein</keyword>
<keyword id="KW-1185">Reference proteome</keyword>
<keyword id="KW-0677">Repeat</keyword>
<keyword id="KW-0964">Secreted</keyword>
<keyword id="KW-0732">Signal</keyword>
<sequence length="287" mass="32475">METTKKLSPIFCFSSLLCLFFTMNQAVSETDHMDTFCIDSSRNTTGNTTYNKNLNTMLSTFRNQSSIVNNYNLTTGLASDTVYGMFLCTGDVNITTCNNCVKNATIEIVKNCTNHREAIIYYIDCMVRYSDKFFLSTFEKKPNSIWSGDDPIPKSLGPFKKRLYKKMGEAIVRSSTLSSALTPYYYLDVTRFDGSYDLDSLVQCSPHLNPENCTICLEYALQEIIDCCSDKFWAMIFTPNCFVNYMITTSPLPPLPSPYHHSGSCSIRGNSEIFWGMIILAALVFTF</sequence>
<gene>
    <name type="primary">CRRSP59</name>
    <name type="ordered locus">At5g41300</name>
    <name type="ORF">K1O13.10</name>
</gene>
<organism>
    <name type="scientific">Arabidopsis thaliana</name>
    <name type="common">Mouse-ear cress</name>
    <dbReference type="NCBI Taxonomy" id="3702"/>
    <lineage>
        <taxon>Eukaryota</taxon>
        <taxon>Viridiplantae</taxon>
        <taxon>Streptophyta</taxon>
        <taxon>Embryophyta</taxon>
        <taxon>Tracheophyta</taxon>
        <taxon>Spermatophyta</taxon>
        <taxon>Magnoliopsida</taxon>
        <taxon>eudicotyledons</taxon>
        <taxon>Gunneridae</taxon>
        <taxon>Pentapetalae</taxon>
        <taxon>rosids</taxon>
        <taxon>malvids</taxon>
        <taxon>Brassicales</taxon>
        <taxon>Brassicaceae</taxon>
        <taxon>Camelineae</taxon>
        <taxon>Arabidopsis</taxon>
    </lineage>
</organism>
<protein>
    <recommendedName>
        <fullName>Cysteine-rich repeat secretory protein 59</fullName>
    </recommendedName>
</protein>
<name>CRR59_ARATH</name>
<comment type="subcellular location">
    <subcellularLocation>
        <location evidence="3">Secreted</location>
    </subcellularLocation>
</comment>
<comment type="similarity">
    <text evidence="3">Belongs to the cysteine-rich repeat secretory protein family.</text>
</comment>
<dbReference type="EMBL" id="AB019225">
    <property type="protein sequence ID" value="BAB11106.1"/>
    <property type="molecule type" value="Genomic_DNA"/>
</dbReference>
<dbReference type="EMBL" id="CP002688">
    <property type="protein sequence ID" value="AED94662.1"/>
    <property type="molecule type" value="Genomic_DNA"/>
</dbReference>
<dbReference type="RefSeq" id="NP_198946.1">
    <property type="nucleotide sequence ID" value="NM_123495.2"/>
</dbReference>
<dbReference type="SMR" id="Q9FHD3"/>
<dbReference type="STRING" id="3702.Q9FHD3"/>
<dbReference type="GlyCosmos" id="Q9FHD3">
    <property type="glycosylation" value="8 sites, No reported glycans"/>
</dbReference>
<dbReference type="GlyGen" id="Q9FHD3">
    <property type="glycosylation" value="8 sites"/>
</dbReference>
<dbReference type="PaxDb" id="3702-AT5G41300.1"/>
<dbReference type="ProteomicsDB" id="224500"/>
<dbReference type="EnsemblPlants" id="AT5G41300.1">
    <property type="protein sequence ID" value="AT5G41300.1"/>
    <property type="gene ID" value="AT5G41300"/>
</dbReference>
<dbReference type="GeneID" id="834131"/>
<dbReference type="Gramene" id="AT5G41300.1">
    <property type="protein sequence ID" value="AT5G41300.1"/>
    <property type="gene ID" value="AT5G41300"/>
</dbReference>
<dbReference type="KEGG" id="ath:AT5G41300"/>
<dbReference type="Araport" id="AT5G41300"/>
<dbReference type="TAIR" id="AT5G41300"/>
<dbReference type="eggNOG" id="ENOG502QWDY">
    <property type="taxonomic scope" value="Eukaryota"/>
</dbReference>
<dbReference type="HOGENOM" id="CLU_000288_35_0_1"/>
<dbReference type="InParanoid" id="Q9FHD3"/>
<dbReference type="OMA" id="NPENCTI"/>
<dbReference type="PhylomeDB" id="Q9FHD3"/>
<dbReference type="PRO" id="PR:Q9FHD3"/>
<dbReference type="Proteomes" id="UP000006548">
    <property type="component" value="Chromosome 5"/>
</dbReference>
<dbReference type="ExpressionAtlas" id="Q9FHD3">
    <property type="expression patterns" value="baseline and differential"/>
</dbReference>
<dbReference type="GO" id="GO:0005576">
    <property type="term" value="C:extracellular region"/>
    <property type="evidence" value="ECO:0007669"/>
    <property type="project" value="UniProtKB-SubCell"/>
</dbReference>
<dbReference type="CDD" id="cd23509">
    <property type="entry name" value="Gnk2-like"/>
    <property type="match status" value="2"/>
</dbReference>
<dbReference type="FunFam" id="3.30.430.20:FF:000030">
    <property type="entry name" value="Cysteine-rich repeat secretory protein 9"/>
    <property type="match status" value="1"/>
</dbReference>
<dbReference type="FunFam" id="3.30.430.20:FF:000003">
    <property type="entry name" value="Cysteine-rich RLK (RECEPTOR-like protein kinase) 10"/>
    <property type="match status" value="1"/>
</dbReference>
<dbReference type="Gene3D" id="3.30.430.20">
    <property type="entry name" value="Gnk2 domain, C-X8-C-X2-C motif"/>
    <property type="match status" value="2"/>
</dbReference>
<dbReference type="InterPro" id="IPR002902">
    <property type="entry name" value="GNK2"/>
</dbReference>
<dbReference type="InterPro" id="IPR038408">
    <property type="entry name" value="GNK2_sf"/>
</dbReference>
<dbReference type="PANTHER" id="PTHR32099">
    <property type="entry name" value="CYSTEINE-RICH REPEAT SECRETORY PROTEIN"/>
    <property type="match status" value="1"/>
</dbReference>
<dbReference type="PANTHER" id="PTHR32099:SF85">
    <property type="entry name" value="CYSTEINE-RICH REPEAT SECRETORY PROTEIN 57-RELATED"/>
    <property type="match status" value="1"/>
</dbReference>
<dbReference type="Pfam" id="PF01657">
    <property type="entry name" value="Stress-antifung"/>
    <property type="match status" value="2"/>
</dbReference>
<dbReference type="PROSITE" id="PS51473">
    <property type="entry name" value="GNK2"/>
    <property type="match status" value="2"/>
</dbReference>
<feature type="signal peptide" evidence="1">
    <location>
        <begin position="1"/>
        <end position="26"/>
    </location>
</feature>
<feature type="chain" id="PRO_0000022621" description="Cysteine-rich repeat secretory protein 59">
    <location>
        <begin position="27"/>
        <end position="287"/>
    </location>
</feature>
<feature type="domain" description="Gnk2-homologous 1" evidence="2">
    <location>
        <begin position="32"/>
        <end position="134"/>
    </location>
</feature>
<feature type="domain" description="Gnk2-homologous 2" evidence="2">
    <location>
        <begin position="140"/>
        <end position="250"/>
    </location>
</feature>
<feature type="glycosylation site" description="N-linked (GlcNAc...) asparagine" evidence="1">
    <location>
        <position position="43"/>
    </location>
</feature>
<feature type="glycosylation site" description="N-linked (GlcNAc...) asparagine" evidence="1">
    <location>
        <position position="47"/>
    </location>
</feature>
<feature type="glycosylation site" description="N-linked (GlcNAc...) asparagine" evidence="1">
    <location>
        <position position="63"/>
    </location>
</feature>
<feature type="glycosylation site" description="N-linked (GlcNAc...) asparagine" evidence="1">
    <location>
        <position position="72"/>
    </location>
</feature>
<feature type="glycosylation site" description="N-linked (GlcNAc...) asparagine" evidence="1">
    <location>
        <position position="93"/>
    </location>
</feature>
<feature type="glycosylation site" description="N-linked (GlcNAc...) asparagine" evidence="1">
    <location>
        <position position="103"/>
    </location>
</feature>
<feature type="glycosylation site" description="N-linked (GlcNAc...) asparagine" evidence="1">
    <location>
        <position position="111"/>
    </location>
</feature>
<feature type="glycosylation site" description="N-linked (GlcNAc...) asparagine" evidence="1">
    <location>
        <position position="212"/>
    </location>
</feature>
<proteinExistence type="evidence at transcript level"/>